<protein>
    <recommendedName>
        <fullName evidence="1">Large ribosomal subunit protein bL31</fullName>
    </recommendedName>
    <alternativeName>
        <fullName evidence="2">50S ribosomal protein L31</fullName>
    </alternativeName>
</protein>
<evidence type="ECO:0000255" key="1">
    <source>
        <dbReference type="HAMAP-Rule" id="MF_00501"/>
    </source>
</evidence>
<evidence type="ECO:0000305" key="2"/>
<keyword id="KW-0479">Metal-binding</keyword>
<keyword id="KW-1185">Reference proteome</keyword>
<keyword id="KW-0687">Ribonucleoprotein</keyword>
<keyword id="KW-0689">Ribosomal protein</keyword>
<keyword id="KW-0694">RNA-binding</keyword>
<keyword id="KW-0699">rRNA-binding</keyword>
<keyword id="KW-0862">Zinc</keyword>
<gene>
    <name evidence="1" type="primary">rpmE</name>
    <name type="ordered locus">Tlet_1623</name>
</gene>
<organism>
    <name type="scientific">Pseudothermotoga lettingae (strain ATCC BAA-301 / DSM 14385 / NBRC 107922 / TMO)</name>
    <name type="common">Thermotoga lettingae</name>
    <dbReference type="NCBI Taxonomy" id="416591"/>
    <lineage>
        <taxon>Bacteria</taxon>
        <taxon>Thermotogati</taxon>
        <taxon>Thermotogota</taxon>
        <taxon>Thermotogae</taxon>
        <taxon>Thermotogales</taxon>
        <taxon>Thermotogaceae</taxon>
        <taxon>Pseudothermotoga</taxon>
    </lineage>
</organism>
<accession>A8F7P3</accession>
<feature type="chain" id="PRO_1000126754" description="Large ribosomal subunit protein bL31">
    <location>
        <begin position="1"/>
        <end position="71"/>
    </location>
</feature>
<feature type="binding site" evidence="1">
    <location>
        <position position="16"/>
    </location>
    <ligand>
        <name>Zn(2+)</name>
        <dbReference type="ChEBI" id="CHEBI:29105"/>
    </ligand>
</feature>
<feature type="binding site" evidence="1">
    <location>
        <position position="18"/>
    </location>
    <ligand>
        <name>Zn(2+)</name>
        <dbReference type="ChEBI" id="CHEBI:29105"/>
    </ligand>
</feature>
<feature type="binding site" evidence="1">
    <location>
        <position position="36"/>
    </location>
    <ligand>
        <name>Zn(2+)</name>
        <dbReference type="ChEBI" id="CHEBI:29105"/>
    </ligand>
</feature>
<feature type="binding site" evidence="1">
    <location>
        <position position="39"/>
    </location>
    <ligand>
        <name>Zn(2+)</name>
        <dbReference type="ChEBI" id="CHEBI:29105"/>
    </ligand>
</feature>
<name>RL31_PSELT</name>
<comment type="function">
    <text evidence="1">Binds the 23S rRNA.</text>
</comment>
<comment type="cofactor">
    <cofactor evidence="1">
        <name>Zn(2+)</name>
        <dbReference type="ChEBI" id="CHEBI:29105"/>
    </cofactor>
    <text evidence="1">Binds 1 zinc ion per subunit.</text>
</comment>
<comment type="subunit">
    <text evidence="1">Part of the 50S ribosomal subunit.</text>
</comment>
<comment type="similarity">
    <text evidence="1">Belongs to the bacterial ribosomal protein bL31 family. Type A subfamily.</text>
</comment>
<reference key="1">
    <citation type="submission" date="2007-08" db="EMBL/GenBank/DDBJ databases">
        <title>Complete sequence of Thermotoga lettingae TMO.</title>
        <authorList>
            <consortium name="US DOE Joint Genome Institute"/>
            <person name="Copeland A."/>
            <person name="Lucas S."/>
            <person name="Lapidus A."/>
            <person name="Barry K."/>
            <person name="Glavina del Rio T."/>
            <person name="Dalin E."/>
            <person name="Tice H."/>
            <person name="Pitluck S."/>
            <person name="Foster B."/>
            <person name="Bruce D."/>
            <person name="Schmutz J."/>
            <person name="Larimer F."/>
            <person name="Land M."/>
            <person name="Hauser L."/>
            <person name="Kyrpides N."/>
            <person name="Mikhailova N."/>
            <person name="Nelson K."/>
            <person name="Gogarten J.P."/>
            <person name="Noll K."/>
            <person name="Richardson P."/>
        </authorList>
    </citation>
    <scope>NUCLEOTIDE SEQUENCE [LARGE SCALE GENOMIC DNA]</scope>
    <source>
        <strain>ATCC BAA-301 / DSM 14385 / NBRC 107922 / TMO</strain>
    </source>
</reference>
<sequence>MKEKIHPEMKLVTVKCACGAEHKFYTTLENVRIDVCSNCHPLYKGMSGASLVIDSEGRIEKFRRKYKDQQY</sequence>
<dbReference type="EMBL" id="CP000812">
    <property type="protein sequence ID" value="ABV34177.1"/>
    <property type="molecule type" value="Genomic_DNA"/>
</dbReference>
<dbReference type="RefSeq" id="WP_012003653.1">
    <property type="nucleotide sequence ID" value="NZ_BSDV01000001.1"/>
</dbReference>
<dbReference type="STRING" id="416591.Tlet_1623"/>
<dbReference type="KEGG" id="tle:Tlet_1623"/>
<dbReference type="eggNOG" id="COG0254">
    <property type="taxonomic scope" value="Bacteria"/>
</dbReference>
<dbReference type="HOGENOM" id="CLU_114306_4_3_0"/>
<dbReference type="OrthoDB" id="9803251at2"/>
<dbReference type="Proteomes" id="UP000002016">
    <property type="component" value="Chromosome"/>
</dbReference>
<dbReference type="GO" id="GO:1990904">
    <property type="term" value="C:ribonucleoprotein complex"/>
    <property type="evidence" value="ECO:0007669"/>
    <property type="project" value="UniProtKB-KW"/>
</dbReference>
<dbReference type="GO" id="GO:0005840">
    <property type="term" value="C:ribosome"/>
    <property type="evidence" value="ECO:0007669"/>
    <property type="project" value="UniProtKB-KW"/>
</dbReference>
<dbReference type="GO" id="GO:0046872">
    <property type="term" value="F:metal ion binding"/>
    <property type="evidence" value="ECO:0007669"/>
    <property type="project" value="UniProtKB-KW"/>
</dbReference>
<dbReference type="GO" id="GO:0019843">
    <property type="term" value="F:rRNA binding"/>
    <property type="evidence" value="ECO:0007669"/>
    <property type="project" value="UniProtKB-KW"/>
</dbReference>
<dbReference type="GO" id="GO:0003735">
    <property type="term" value="F:structural constituent of ribosome"/>
    <property type="evidence" value="ECO:0007669"/>
    <property type="project" value="InterPro"/>
</dbReference>
<dbReference type="GO" id="GO:0006412">
    <property type="term" value="P:translation"/>
    <property type="evidence" value="ECO:0007669"/>
    <property type="project" value="UniProtKB-UniRule"/>
</dbReference>
<dbReference type="Gene3D" id="4.10.830.30">
    <property type="entry name" value="Ribosomal protein L31"/>
    <property type="match status" value="1"/>
</dbReference>
<dbReference type="HAMAP" id="MF_00501">
    <property type="entry name" value="Ribosomal_bL31_1"/>
    <property type="match status" value="1"/>
</dbReference>
<dbReference type="InterPro" id="IPR034704">
    <property type="entry name" value="Ribosomal_bL28/bL31-like_sf"/>
</dbReference>
<dbReference type="InterPro" id="IPR002150">
    <property type="entry name" value="Ribosomal_bL31"/>
</dbReference>
<dbReference type="InterPro" id="IPR027491">
    <property type="entry name" value="Ribosomal_bL31_A"/>
</dbReference>
<dbReference type="InterPro" id="IPR042105">
    <property type="entry name" value="Ribosomal_bL31_sf"/>
</dbReference>
<dbReference type="NCBIfam" id="TIGR00105">
    <property type="entry name" value="L31"/>
    <property type="match status" value="1"/>
</dbReference>
<dbReference type="NCBIfam" id="NF000612">
    <property type="entry name" value="PRK00019.1"/>
    <property type="match status" value="1"/>
</dbReference>
<dbReference type="PANTHER" id="PTHR33280">
    <property type="entry name" value="50S RIBOSOMAL PROTEIN L31, CHLOROPLASTIC"/>
    <property type="match status" value="1"/>
</dbReference>
<dbReference type="PANTHER" id="PTHR33280:SF1">
    <property type="entry name" value="LARGE RIBOSOMAL SUBUNIT PROTEIN BL31C"/>
    <property type="match status" value="1"/>
</dbReference>
<dbReference type="Pfam" id="PF01197">
    <property type="entry name" value="Ribosomal_L31"/>
    <property type="match status" value="1"/>
</dbReference>
<dbReference type="PRINTS" id="PR01249">
    <property type="entry name" value="RIBOSOMALL31"/>
</dbReference>
<dbReference type="SUPFAM" id="SSF143800">
    <property type="entry name" value="L28p-like"/>
    <property type="match status" value="1"/>
</dbReference>
<proteinExistence type="inferred from homology"/>